<comment type="similarity">
    <text evidence="1">Belongs to the universal ribosomal protein uS2 family.</text>
</comment>
<comment type="sequence caution" evidence="3">
    <conflict type="erroneous initiation">
        <sequence resource="EMBL-CDS" id="CAD76890"/>
    </conflict>
</comment>
<gene>
    <name evidence="1" type="primary">rpsB</name>
    <name type="ordered locus">RB10638</name>
</gene>
<evidence type="ECO:0000255" key="1">
    <source>
        <dbReference type="HAMAP-Rule" id="MF_00291"/>
    </source>
</evidence>
<evidence type="ECO:0000256" key="2">
    <source>
        <dbReference type="SAM" id="MobiDB-lite"/>
    </source>
</evidence>
<evidence type="ECO:0000305" key="3"/>
<proteinExistence type="inferred from homology"/>
<reference key="1">
    <citation type="journal article" date="2003" name="Proc. Natl. Acad. Sci. U.S.A.">
        <title>Complete genome sequence of the marine planctomycete Pirellula sp. strain 1.</title>
        <authorList>
            <person name="Gloeckner F.O."/>
            <person name="Kube M."/>
            <person name="Bauer M."/>
            <person name="Teeling H."/>
            <person name="Lombardot T."/>
            <person name="Ludwig W."/>
            <person name="Gade D."/>
            <person name="Beck A."/>
            <person name="Borzym K."/>
            <person name="Heitmann K."/>
            <person name="Rabus R."/>
            <person name="Schlesner H."/>
            <person name="Amann R."/>
            <person name="Reinhardt R."/>
        </authorList>
    </citation>
    <scope>NUCLEOTIDE SEQUENCE [LARGE SCALE GENOMIC DNA]</scope>
    <source>
        <strain>DSM 10527 / NCIMB 13988 / SH1</strain>
    </source>
</reference>
<feature type="chain" id="PRO_0000226043" description="Small ribosomal subunit protein uS2">
    <location>
        <begin position="1"/>
        <end position="260"/>
    </location>
</feature>
<feature type="region of interest" description="Disordered" evidence="2">
    <location>
        <begin position="225"/>
        <end position="260"/>
    </location>
</feature>
<feature type="compositionally biased region" description="Low complexity" evidence="2">
    <location>
        <begin position="231"/>
        <end position="260"/>
    </location>
</feature>
<protein>
    <recommendedName>
        <fullName evidence="1">Small ribosomal subunit protein uS2</fullName>
    </recommendedName>
    <alternativeName>
        <fullName evidence="3">30S ribosomal protein S2</fullName>
    </alternativeName>
</protein>
<organism>
    <name type="scientific">Rhodopirellula baltica (strain DSM 10527 / NCIMB 13988 / SH1)</name>
    <dbReference type="NCBI Taxonomy" id="243090"/>
    <lineage>
        <taxon>Bacteria</taxon>
        <taxon>Pseudomonadati</taxon>
        <taxon>Planctomycetota</taxon>
        <taxon>Planctomycetia</taxon>
        <taxon>Pirellulales</taxon>
        <taxon>Pirellulaceae</taxon>
        <taxon>Rhodopirellula</taxon>
    </lineage>
</organism>
<name>RS2_RHOBA</name>
<sequence>MANEIVKEMIEAGVHFGHRTSLWNPKMAPYIFGKKNQIHILDIRETLRGLLRAKKYLSQVAAGGSLILFVGTKRQAGEAVEEQSLRCGMPFVSERWLGGTLTNFRTIRSRLGRLEELEALRAGDGINDYSKKMQSSLNREYRKMYRNLNGLRTMNRLPEVMFIVDPGKERNAVREAKRLGITTVALIDTDSDPSQIDLPIPGNDDGIRSVEMIMRELADAVIAGKGQTQTEAAPNAQAAPEAAAPAEQPAEEAAAASSEG</sequence>
<accession>Q7UKH4</accession>
<dbReference type="EMBL" id="BX294152">
    <property type="protein sequence ID" value="CAD76890.1"/>
    <property type="status" value="ALT_INIT"/>
    <property type="molecule type" value="Genomic_DNA"/>
</dbReference>
<dbReference type="RefSeq" id="NP_869529.2">
    <property type="nucleotide sequence ID" value="NC_005027.1"/>
</dbReference>
<dbReference type="RefSeq" id="WP_011122857.1">
    <property type="nucleotide sequence ID" value="NC_005027.1"/>
</dbReference>
<dbReference type="SMR" id="Q7UKH4"/>
<dbReference type="FunCoup" id="Q7UKH4">
    <property type="interactions" value="665"/>
</dbReference>
<dbReference type="STRING" id="243090.RB10638"/>
<dbReference type="EnsemblBacteria" id="CAD76890">
    <property type="protein sequence ID" value="CAD76890"/>
    <property type="gene ID" value="RB10638"/>
</dbReference>
<dbReference type="KEGG" id="rba:RB10638"/>
<dbReference type="PATRIC" id="fig|243090.15.peg.5139"/>
<dbReference type="eggNOG" id="COG0052">
    <property type="taxonomic scope" value="Bacteria"/>
</dbReference>
<dbReference type="HOGENOM" id="CLU_696130_0_0_0"/>
<dbReference type="InParanoid" id="Q7UKH4"/>
<dbReference type="OrthoDB" id="9808036at2"/>
<dbReference type="Proteomes" id="UP000001025">
    <property type="component" value="Chromosome"/>
</dbReference>
<dbReference type="GO" id="GO:0022627">
    <property type="term" value="C:cytosolic small ribosomal subunit"/>
    <property type="evidence" value="ECO:0000318"/>
    <property type="project" value="GO_Central"/>
</dbReference>
<dbReference type="GO" id="GO:0003735">
    <property type="term" value="F:structural constituent of ribosome"/>
    <property type="evidence" value="ECO:0000318"/>
    <property type="project" value="GO_Central"/>
</dbReference>
<dbReference type="GO" id="GO:0006412">
    <property type="term" value="P:translation"/>
    <property type="evidence" value="ECO:0007669"/>
    <property type="project" value="UniProtKB-UniRule"/>
</dbReference>
<dbReference type="CDD" id="cd01425">
    <property type="entry name" value="RPS2"/>
    <property type="match status" value="1"/>
</dbReference>
<dbReference type="Gene3D" id="3.40.50.10490">
    <property type="entry name" value="Glucose-6-phosphate isomerase like protein, domain 1"/>
    <property type="match status" value="1"/>
</dbReference>
<dbReference type="Gene3D" id="1.10.287.610">
    <property type="entry name" value="Helix hairpin bin"/>
    <property type="match status" value="1"/>
</dbReference>
<dbReference type="HAMAP" id="MF_00291_B">
    <property type="entry name" value="Ribosomal_uS2_B"/>
    <property type="match status" value="1"/>
</dbReference>
<dbReference type="InterPro" id="IPR001865">
    <property type="entry name" value="Ribosomal_uS2"/>
</dbReference>
<dbReference type="InterPro" id="IPR005706">
    <property type="entry name" value="Ribosomal_uS2_bac/mit/plastid"/>
</dbReference>
<dbReference type="InterPro" id="IPR018130">
    <property type="entry name" value="Ribosomal_uS2_CS"/>
</dbReference>
<dbReference type="InterPro" id="IPR023591">
    <property type="entry name" value="Ribosomal_uS2_flav_dom_sf"/>
</dbReference>
<dbReference type="NCBIfam" id="TIGR01011">
    <property type="entry name" value="rpsB_bact"/>
    <property type="match status" value="1"/>
</dbReference>
<dbReference type="PANTHER" id="PTHR12534">
    <property type="entry name" value="30S RIBOSOMAL PROTEIN S2 PROKARYOTIC AND ORGANELLAR"/>
    <property type="match status" value="1"/>
</dbReference>
<dbReference type="PANTHER" id="PTHR12534:SF0">
    <property type="entry name" value="SMALL RIBOSOMAL SUBUNIT PROTEIN US2M"/>
    <property type="match status" value="1"/>
</dbReference>
<dbReference type="Pfam" id="PF00318">
    <property type="entry name" value="Ribosomal_S2"/>
    <property type="match status" value="1"/>
</dbReference>
<dbReference type="PRINTS" id="PR00395">
    <property type="entry name" value="RIBOSOMALS2"/>
</dbReference>
<dbReference type="SUPFAM" id="SSF52313">
    <property type="entry name" value="Ribosomal protein S2"/>
    <property type="match status" value="1"/>
</dbReference>
<dbReference type="PROSITE" id="PS00962">
    <property type="entry name" value="RIBOSOMAL_S2_1"/>
    <property type="match status" value="1"/>
</dbReference>
<keyword id="KW-1185">Reference proteome</keyword>
<keyword id="KW-0687">Ribonucleoprotein</keyword>
<keyword id="KW-0689">Ribosomal protein</keyword>